<evidence type="ECO:0000255" key="1"/>
<evidence type="ECO:0000305" key="2"/>
<evidence type="ECO:0007829" key="3">
    <source>
        <dbReference type="PDB" id="3C01"/>
    </source>
</evidence>
<proteinExistence type="evidence at protein level"/>
<comment type="function">
    <text>Involved in a secretory pathway responsible for the surface presentation of determinants needed for the entry of Salmonella species into mammalian cells.</text>
</comment>
<comment type="subcellular location">
    <subcellularLocation>
        <location evidence="2">Cell inner membrane</location>
        <topology evidence="2">Multi-pass membrane protein</topology>
    </subcellularLocation>
</comment>
<comment type="similarity">
    <text evidence="2">Belongs to the type III secretion exporter family.</text>
</comment>
<organism>
    <name type="scientific">Salmonella typhimurium (strain LT2 / SGSC1412 / ATCC 700720)</name>
    <dbReference type="NCBI Taxonomy" id="99287"/>
    <lineage>
        <taxon>Bacteria</taxon>
        <taxon>Pseudomonadati</taxon>
        <taxon>Pseudomonadota</taxon>
        <taxon>Gammaproteobacteria</taxon>
        <taxon>Enterobacterales</taxon>
        <taxon>Enterobacteriaceae</taxon>
        <taxon>Salmonella</taxon>
    </lineage>
</organism>
<sequence>MSSNKTEKPTKKRLEDSAKKGQSFKSKDLIIACLTLGGIAYLVSYGSFNEFMGIIKIIIADNFDQSMADYSLAVFGIGLKYLIPFMLLCLVCSALPALLQAGFVLATEALKPNLSALNPVEGAKKLFSMRTVKDTVKTLLYLSSFVVAAIICWKKYKVEIFSQLNGNIVGIAVIWRELLLALVLTCLACALIVLLLDAIAEYFLTMKDMKMDKEEVKREMKEQEGNPEVKSKRREVHMEILSEQVKSDIENSRLIVANPTHITIGIYFKPELMPIPMISVYETNQRALAVRAYAEKVGVPVIVDIKLARSLFKTHRRYDLVSLEEIDEVLRLLVWLEEVENAGKDVIQPQENEVRH</sequence>
<dbReference type="EMBL" id="X73525">
    <property type="protein sequence ID" value="CAA51927.1"/>
    <property type="molecule type" value="Genomic_DNA"/>
</dbReference>
<dbReference type="EMBL" id="AE006468">
    <property type="protein sequence ID" value="AAL21767.1"/>
    <property type="molecule type" value="Genomic_DNA"/>
</dbReference>
<dbReference type="PIR" id="S37356">
    <property type="entry name" value="S37356"/>
</dbReference>
<dbReference type="RefSeq" id="NP_461808.1">
    <property type="nucleotide sequence ID" value="NC_003197.2"/>
</dbReference>
<dbReference type="RefSeq" id="WP_000097719.1">
    <property type="nucleotide sequence ID" value="NC_003197.2"/>
</dbReference>
<dbReference type="PDB" id="3C01">
    <property type="method" value="X-ray"/>
    <property type="resolution" value="2.60 A"/>
    <property type="chains" value="A/B/C/D=211-258, E/F/G/H=259-356"/>
</dbReference>
<dbReference type="PDBsum" id="3C01"/>
<dbReference type="SMR" id="P40702"/>
<dbReference type="DIP" id="DIP-59558N"/>
<dbReference type="IntAct" id="P40702">
    <property type="interactions" value="9"/>
</dbReference>
<dbReference type="STRING" id="99287.STM2887"/>
<dbReference type="MEROPS" id="N06.002"/>
<dbReference type="TCDB" id="3.A.6.1.3">
    <property type="family name" value="the type iii (virulence-related) secretory pathway (iiisp) family"/>
</dbReference>
<dbReference type="PaxDb" id="99287-STM2887"/>
<dbReference type="GeneID" id="1254410"/>
<dbReference type="KEGG" id="stm:STM2887"/>
<dbReference type="PATRIC" id="fig|99287.12.peg.3043"/>
<dbReference type="HOGENOM" id="CLU_041013_1_3_6"/>
<dbReference type="OMA" id="QPNPGAY"/>
<dbReference type="PhylomeDB" id="P40702"/>
<dbReference type="BioCyc" id="SENT99287:STM2887-MONOMER"/>
<dbReference type="EvolutionaryTrace" id="P40702"/>
<dbReference type="Proteomes" id="UP000001014">
    <property type="component" value="Chromosome"/>
</dbReference>
<dbReference type="GO" id="GO:0005886">
    <property type="term" value="C:plasma membrane"/>
    <property type="evidence" value="ECO:0000318"/>
    <property type="project" value="GO_Central"/>
</dbReference>
<dbReference type="GO" id="GO:0009306">
    <property type="term" value="P:protein secretion"/>
    <property type="evidence" value="ECO:0007669"/>
    <property type="project" value="InterPro"/>
</dbReference>
<dbReference type="Gene3D" id="6.10.250.2080">
    <property type="match status" value="1"/>
</dbReference>
<dbReference type="Gene3D" id="3.40.1690.10">
    <property type="entry name" value="secretion proteins EscU"/>
    <property type="match status" value="1"/>
</dbReference>
<dbReference type="InterPro" id="IPR006307">
    <property type="entry name" value="BsaZ-like"/>
</dbReference>
<dbReference type="InterPro" id="IPR006135">
    <property type="entry name" value="T3SS_substrate_exporter"/>
</dbReference>
<dbReference type="InterPro" id="IPR029025">
    <property type="entry name" value="T3SS_substrate_exporter_C"/>
</dbReference>
<dbReference type="NCBIfam" id="TIGR01404">
    <property type="entry name" value="FlhB_rel_III"/>
    <property type="match status" value="1"/>
</dbReference>
<dbReference type="NCBIfam" id="NF006017">
    <property type="entry name" value="PRK08156.1"/>
    <property type="match status" value="1"/>
</dbReference>
<dbReference type="PANTHER" id="PTHR30531">
    <property type="entry name" value="FLAGELLAR BIOSYNTHETIC PROTEIN FLHB"/>
    <property type="match status" value="1"/>
</dbReference>
<dbReference type="PANTHER" id="PTHR30531:SF14">
    <property type="entry name" value="SURFACE PRESENTATION OF ANTIGENS PROTEIN SPAS"/>
    <property type="match status" value="1"/>
</dbReference>
<dbReference type="Pfam" id="PF01312">
    <property type="entry name" value="Bac_export_2"/>
    <property type="match status" value="1"/>
</dbReference>
<dbReference type="PRINTS" id="PR00950">
    <property type="entry name" value="TYPE3IMSPROT"/>
</dbReference>
<dbReference type="SUPFAM" id="SSF160544">
    <property type="entry name" value="EscU C-terminal domain-like"/>
    <property type="match status" value="1"/>
</dbReference>
<gene>
    <name type="primary">spaS</name>
    <name type="ordered locus">STM2887</name>
</gene>
<feature type="chain" id="PRO_0000180956" description="Surface presentation of antigens protein SpaS">
    <location>
        <begin position="1"/>
        <end position="356"/>
    </location>
</feature>
<feature type="transmembrane region" description="Helical" evidence="1">
    <location>
        <begin position="29"/>
        <end position="49"/>
    </location>
</feature>
<feature type="transmembrane region" description="Helical" evidence="1">
    <location>
        <begin position="72"/>
        <end position="92"/>
    </location>
</feature>
<feature type="transmembrane region" description="Helical" evidence="1">
    <location>
        <begin position="132"/>
        <end position="152"/>
    </location>
</feature>
<feature type="transmembrane region" description="Helical" evidence="1">
    <location>
        <begin position="179"/>
        <end position="199"/>
    </location>
</feature>
<feature type="transmembrane region" description="Helical" evidence="1">
    <location>
        <begin position="261"/>
        <end position="281"/>
    </location>
</feature>
<feature type="helix" evidence="3">
    <location>
        <begin position="243"/>
        <end position="250"/>
    </location>
</feature>
<feature type="strand" evidence="3">
    <location>
        <begin position="253"/>
        <end position="257"/>
    </location>
</feature>
<feature type="strand" evidence="3">
    <location>
        <begin position="262"/>
        <end position="267"/>
    </location>
</feature>
<feature type="turn" evidence="3">
    <location>
        <begin position="270"/>
        <end position="272"/>
    </location>
</feature>
<feature type="strand" evidence="3">
    <location>
        <begin position="277"/>
        <end position="283"/>
    </location>
</feature>
<feature type="helix" evidence="3">
    <location>
        <begin position="284"/>
        <end position="297"/>
    </location>
</feature>
<feature type="strand" evidence="3">
    <location>
        <begin position="301"/>
        <end position="303"/>
    </location>
</feature>
<feature type="helix" evidence="3">
    <location>
        <begin position="305"/>
        <end position="314"/>
    </location>
</feature>
<feature type="helix" evidence="3">
    <location>
        <begin position="323"/>
        <end position="342"/>
    </location>
</feature>
<reference key="1">
    <citation type="journal article" date="1993" name="EMBO J.">
        <title>Cognate gene clusters govern invasion of host epithelial cells by Salmonella typhimurium and Shigella flexneri.</title>
        <authorList>
            <person name="Groisman E.A."/>
            <person name="Ochman H."/>
        </authorList>
    </citation>
    <scope>NUCLEOTIDE SEQUENCE [GENOMIC DNA]</scope>
</reference>
<reference key="2">
    <citation type="journal article" date="2001" name="Nature">
        <title>Complete genome sequence of Salmonella enterica serovar Typhimurium LT2.</title>
        <authorList>
            <person name="McClelland M."/>
            <person name="Sanderson K.E."/>
            <person name="Spieth J."/>
            <person name="Clifton S.W."/>
            <person name="Latreille P."/>
            <person name="Courtney L."/>
            <person name="Porwollik S."/>
            <person name="Ali J."/>
            <person name="Dante M."/>
            <person name="Du F."/>
            <person name="Hou S."/>
            <person name="Layman D."/>
            <person name="Leonard S."/>
            <person name="Nguyen C."/>
            <person name="Scott K."/>
            <person name="Holmes A."/>
            <person name="Grewal N."/>
            <person name="Mulvaney E."/>
            <person name="Ryan E."/>
            <person name="Sun H."/>
            <person name="Florea L."/>
            <person name="Miller W."/>
            <person name="Stoneking T."/>
            <person name="Nhan M."/>
            <person name="Waterston R."/>
            <person name="Wilson R.K."/>
        </authorList>
    </citation>
    <scope>NUCLEOTIDE SEQUENCE [LARGE SCALE GENOMIC DNA]</scope>
    <source>
        <strain>LT2 / SGSC1412 / ATCC 700720</strain>
    </source>
</reference>
<protein>
    <recommendedName>
        <fullName>Surface presentation of antigens protein SpaS</fullName>
    </recommendedName>
</protein>
<keyword id="KW-0002">3D-structure</keyword>
<keyword id="KW-0997">Cell inner membrane</keyword>
<keyword id="KW-1003">Cell membrane</keyword>
<keyword id="KW-0472">Membrane</keyword>
<keyword id="KW-1185">Reference proteome</keyword>
<keyword id="KW-0812">Transmembrane</keyword>
<keyword id="KW-1133">Transmembrane helix</keyword>
<keyword id="KW-0843">Virulence</keyword>
<name>SPAS_SALTY</name>
<accession>P40702</accession>